<sequence>MDSSYSFALGTSSSILPKLSFRNVENRFYGEKNNNNGLCKRFGSDLGSKKFRNQKFKHGVVYAVATSDNPKKAMTVKTSMFERRKVDPQNVAAIILGGGNGAKLFPLTMRAATPAVPVGGCYRLIDIPMSNCINSCINKIFVLTQFNSASLNRHLARTYFGNGINFGGGFVEVLAATQTPGEAGKKWFQGTADAVRKFLWVFEDAKNRNIENILILSGDHLYRMNYMDFVQSHVDSNADITLSCAPVSESRASNFGLVKIDRGGRVIHFSEKPTGVDLKSMQTDTTMLGLSHQEATDSPYIASMGVYCFKTEALLNLLTRQYPSSNDFGSEVIPAAIRDHDVQGYIFRDYWEDIGTIKTFYEANLALVEERPKFEFYDPETPFYTSPRFLPPTKAEKCRMVDSIISHGCFLRECSVQRSIIGERSRLDYGVELQDTLMLGADYYQTESEIASLLAEGKVPIGIGKDTKIRKCIIDKNAKIGKNVIIMNKGDVQEADRPEEGFYIRSGITVIVEKATIQDGTVI</sequence>
<name>GLGL4_ARATH</name>
<organism>
    <name type="scientific">Arabidopsis thaliana</name>
    <name type="common">Mouse-ear cress</name>
    <dbReference type="NCBI Taxonomy" id="3702"/>
    <lineage>
        <taxon>Eukaryota</taxon>
        <taxon>Viridiplantae</taxon>
        <taxon>Streptophyta</taxon>
        <taxon>Embryophyta</taxon>
        <taxon>Tracheophyta</taxon>
        <taxon>Spermatophyta</taxon>
        <taxon>Magnoliopsida</taxon>
        <taxon>eudicotyledons</taxon>
        <taxon>Gunneridae</taxon>
        <taxon>Pentapetalae</taxon>
        <taxon>rosids</taxon>
        <taxon>malvids</taxon>
        <taxon>Brassicales</taxon>
        <taxon>Brassicaceae</taxon>
        <taxon>Camelineae</taxon>
        <taxon>Arabidopsis</taxon>
    </lineage>
</organism>
<accession>Q9SIK1</accession>
<reference key="1">
    <citation type="journal article" date="1999" name="Nature">
        <title>Sequence and analysis of chromosome 2 of the plant Arabidopsis thaliana.</title>
        <authorList>
            <person name="Lin X."/>
            <person name="Kaul S."/>
            <person name="Rounsley S.D."/>
            <person name="Shea T.P."/>
            <person name="Benito M.-I."/>
            <person name="Town C.D."/>
            <person name="Fujii C.Y."/>
            <person name="Mason T.M."/>
            <person name="Bowman C.L."/>
            <person name="Barnstead M.E."/>
            <person name="Feldblyum T.V."/>
            <person name="Buell C.R."/>
            <person name="Ketchum K.A."/>
            <person name="Lee J.J."/>
            <person name="Ronning C.M."/>
            <person name="Koo H.L."/>
            <person name="Moffat K.S."/>
            <person name="Cronin L.A."/>
            <person name="Shen M."/>
            <person name="Pai G."/>
            <person name="Van Aken S."/>
            <person name="Umayam L."/>
            <person name="Tallon L.J."/>
            <person name="Gill J.E."/>
            <person name="Adams M.D."/>
            <person name="Carrera A.J."/>
            <person name="Creasy T.H."/>
            <person name="Goodman H.M."/>
            <person name="Somerville C.R."/>
            <person name="Copenhaver G.P."/>
            <person name="Preuss D."/>
            <person name="Nierman W.C."/>
            <person name="White O."/>
            <person name="Eisen J.A."/>
            <person name="Salzberg S.L."/>
            <person name="Fraser C.M."/>
            <person name="Venter J.C."/>
        </authorList>
    </citation>
    <scope>NUCLEOTIDE SEQUENCE [LARGE SCALE GENOMIC DNA]</scope>
    <source>
        <strain>cv. Columbia</strain>
    </source>
</reference>
<reference key="2">
    <citation type="journal article" date="2017" name="Plant J.">
        <title>Araport11: a complete reannotation of the Arabidopsis thaliana reference genome.</title>
        <authorList>
            <person name="Cheng C.Y."/>
            <person name="Krishnakumar V."/>
            <person name="Chan A.P."/>
            <person name="Thibaud-Nissen F."/>
            <person name="Schobel S."/>
            <person name="Town C.D."/>
        </authorList>
    </citation>
    <scope>GENOME REANNOTATION</scope>
    <source>
        <strain>cv. Columbia</strain>
    </source>
</reference>
<reference key="3">
    <citation type="journal article" date="2003" name="Science">
        <title>Empirical analysis of transcriptional activity in the Arabidopsis genome.</title>
        <authorList>
            <person name="Yamada K."/>
            <person name="Lim J."/>
            <person name="Dale J.M."/>
            <person name="Chen H."/>
            <person name="Shinn P."/>
            <person name="Palm C.J."/>
            <person name="Southwick A.M."/>
            <person name="Wu H.C."/>
            <person name="Kim C.J."/>
            <person name="Nguyen M."/>
            <person name="Pham P.K."/>
            <person name="Cheuk R.F."/>
            <person name="Karlin-Newmann G."/>
            <person name="Liu S.X."/>
            <person name="Lam B."/>
            <person name="Sakano H."/>
            <person name="Wu T."/>
            <person name="Yu G."/>
            <person name="Miranda M."/>
            <person name="Quach H.L."/>
            <person name="Tripp M."/>
            <person name="Chang C.H."/>
            <person name="Lee J.M."/>
            <person name="Toriumi M.J."/>
            <person name="Chan M.M."/>
            <person name="Tang C.C."/>
            <person name="Onodera C.S."/>
            <person name="Deng J.M."/>
            <person name="Akiyama K."/>
            <person name="Ansari Y."/>
            <person name="Arakawa T."/>
            <person name="Banh J."/>
            <person name="Banno F."/>
            <person name="Bowser L."/>
            <person name="Brooks S.Y."/>
            <person name="Carninci P."/>
            <person name="Chao Q."/>
            <person name="Choy N."/>
            <person name="Enju A."/>
            <person name="Goldsmith A.D."/>
            <person name="Gurjal M."/>
            <person name="Hansen N.F."/>
            <person name="Hayashizaki Y."/>
            <person name="Johnson-Hopson C."/>
            <person name="Hsuan V.W."/>
            <person name="Iida K."/>
            <person name="Karnes M."/>
            <person name="Khan S."/>
            <person name="Koesema E."/>
            <person name="Ishida J."/>
            <person name="Jiang P.X."/>
            <person name="Jones T."/>
            <person name="Kawai J."/>
            <person name="Kamiya A."/>
            <person name="Meyers C."/>
            <person name="Nakajima M."/>
            <person name="Narusaka M."/>
            <person name="Seki M."/>
            <person name="Sakurai T."/>
            <person name="Satou M."/>
            <person name="Tamse R."/>
            <person name="Vaysberg M."/>
            <person name="Wallender E.K."/>
            <person name="Wong C."/>
            <person name="Yamamura Y."/>
            <person name="Yuan S."/>
            <person name="Shinozaki K."/>
            <person name="Davis R.W."/>
            <person name="Theologis A."/>
            <person name="Ecker J.R."/>
        </authorList>
    </citation>
    <scope>NUCLEOTIDE SEQUENCE [LARGE SCALE MRNA]</scope>
    <source>
        <strain>cv. Columbia</strain>
    </source>
</reference>
<dbReference type="EC" id="2.7.7.27"/>
<dbReference type="EMBL" id="AC007119">
    <property type="protein sequence ID" value="AAD23646.1"/>
    <property type="molecule type" value="Genomic_DNA"/>
</dbReference>
<dbReference type="EMBL" id="CP002685">
    <property type="protein sequence ID" value="AEC07199.1"/>
    <property type="molecule type" value="Genomic_DNA"/>
</dbReference>
<dbReference type="EMBL" id="CP002685">
    <property type="protein sequence ID" value="AEC07200.1"/>
    <property type="molecule type" value="Genomic_DNA"/>
</dbReference>
<dbReference type="EMBL" id="CP002685">
    <property type="protein sequence ID" value="ANM62852.1"/>
    <property type="molecule type" value="Genomic_DNA"/>
</dbReference>
<dbReference type="EMBL" id="CP002685">
    <property type="protein sequence ID" value="ANM62853.1"/>
    <property type="molecule type" value="Genomic_DNA"/>
</dbReference>
<dbReference type="EMBL" id="CP002685">
    <property type="protein sequence ID" value="ANM62854.1"/>
    <property type="molecule type" value="Genomic_DNA"/>
</dbReference>
<dbReference type="EMBL" id="CP002685">
    <property type="protein sequence ID" value="ANM62855.1"/>
    <property type="molecule type" value="Genomic_DNA"/>
</dbReference>
<dbReference type="EMBL" id="CP002685">
    <property type="protein sequence ID" value="ANM62856.1"/>
    <property type="molecule type" value="Genomic_DNA"/>
</dbReference>
<dbReference type="EMBL" id="AY070429">
    <property type="protein sequence ID" value="AAL49924.1"/>
    <property type="molecule type" value="mRNA"/>
</dbReference>
<dbReference type="EMBL" id="AY096657">
    <property type="protein sequence ID" value="AAM20291.1"/>
    <property type="molecule type" value="mRNA"/>
</dbReference>
<dbReference type="PIR" id="A84603">
    <property type="entry name" value="A84603"/>
</dbReference>
<dbReference type="RefSeq" id="NP_001031391.1">
    <property type="nucleotide sequence ID" value="NM_001036314.2"/>
</dbReference>
<dbReference type="RefSeq" id="NP_001324978.1">
    <property type="nucleotide sequence ID" value="NM_001335766.1"/>
</dbReference>
<dbReference type="RefSeq" id="NP_001324979.1">
    <property type="nucleotide sequence ID" value="NM_001335767.1"/>
</dbReference>
<dbReference type="RefSeq" id="NP_001324980.1">
    <property type="nucleotide sequence ID" value="NM_001335768.1"/>
</dbReference>
<dbReference type="RefSeq" id="NP_001324981.1">
    <property type="nucleotide sequence ID" value="NM_001335769.1"/>
</dbReference>
<dbReference type="RefSeq" id="NP_001324982.1">
    <property type="nucleotide sequence ID" value="NM_001335765.1"/>
</dbReference>
<dbReference type="RefSeq" id="NP_179753.1">
    <property type="nucleotide sequence ID" value="NM_127730.5"/>
</dbReference>
<dbReference type="SMR" id="Q9SIK1"/>
<dbReference type="BioGRID" id="2050">
    <property type="interactions" value="1"/>
</dbReference>
<dbReference type="FunCoup" id="Q9SIK1">
    <property type="interactions" value="290"/>
</dbReference>
<dbReference type="IntAct" id="Q9SIK1">
    <property type="interactions" value="1"/>
</dbReference>
<dbReference type="STRING" id="3702.Q9SIK1"/>
<dbReference type="iPTMnet" id="Q9SIK1"/>
<dbReference type="PaxDb" id="3702-AT2G21590.2"/>
<dbReference type="ProteomicsDB" id="220772"/>
<dbReference type="EnsemblPlants" id="AT2G21590.1">
    <property type="protein sequence ID" value="AT2G21590.1"/>
    <property type="gene ID" value="AT2G21590"/>
</dbReference>
<dbReference type="EnsemblPlants" id="AT2G21590.2">
    <property type="protein sequence ID" value="AT2G21590.2"/>
    <property type="gene ID" value="AT2G21590"/>
</dbReference>
<dbReference type="EnsemblPlants" id="AT2G21590.3">
    <property type="protein sequence ID" value="AT2G21590.3"/>
    <property type="gene ID" value="AT2G21590"/>
</dbReference>
<dbReference type="EnsemblPlants" id="AT2G21590.4">
    <property type="protein sequence ID" value="AT2G21590.4"/>
    <property type="gene ID" value="AT2G21590"/>
</dbReference>
<dbReference type="EnsemblPlants" id="AT2G21590.5">
    <property type="protein sequence ID" value="AT2G21590.5"/>
    <property type="gene ID" value="AT2G21590"/>
</dbReference>
<dbReference type="EnsemblPlants" id="AT2G21590.6">
    <property type="protein sequence ID" value="AT2G21590.6"/>
    <property type="gene ID" value="AT2G21590"/>
</dbReference>
<dbReference type="EnsemblPlants" id="AT2G21590.7">
    <property type="protein sequence ID" value="AT2G21590.7"/>
    <property type="gene ID" value="AT2G21590"/>
</dbReference>
<dbReference type="GeneID" id="816697"/>
<dbReference type="Gramene" id="AT2G21590.1">
    <property type="protein sequence ID" value="AT2G21590.1"/>
    <property type="gene ID" value="AT2G21590"/>
</dbReference>
<dbReference type="Gramene" id="AT2G21590.2">
    <property type="protein sequence ID" value="AT2G21590.2"/>
    <property type="gene ID" value="AT2G21590"/>
</dbReference>
<dbReference type="Gramene" id="AT2G21590.3">
    <property type="protein sequence ID" value="AT2G21590.3"/>
    <property type="gene ID" value="AT2G21590"/>
</dbReference>
<dbReference type="Gramene" id="AT2G21590.4">
    <property type="protein sequence ID" value="AT2G21590.4"/>
    <property type="gene ID" value="AT2G21590"/>
</dbReference>
<dbReference type="Gramene" id="AT2G21590.5">
    <property type="protein sequence ID" value="AT2G21590.5"/>
    <property type="gene ID" value="AT2G21590"/>
</dbReference>
<dbReference type="Gramene" id="AT2G21590.6">
    <property type="protein sequence ID" value="AT2G21590.6"/>
    <property type="gene ID" value="AT2G21590"/>
</dbReference>
<dbReference type="Gramene" id="AT2G21590.7">
    <property type="protein sequence ID" value="AT2G21590.7"/>
    <property type="gene ID" value="AT2G21590"/>
</dbReference>
<dbReference type="KEGG" id="ath:AT2G21590"/>
<dbReference type="Araport" id="AT2G21590"/>
<dbReference type="TAIR" id="AT2G21590">
    <property type="gene designation" value="APL4"/>
</dbReference>
<dbReference type="eggNOG" id="KOG1322">
    <property type="taxonomic scope" value="Eukaryota"/>
</dbReference>
<dbReference type="HOGENOM" id="CLU_029499_14_4_1"/>
<dbReference type="InParanoid" id="Q9SIK1"/>
<dbReference type="OMA" id="QYIASMG"/>
<dbReference type="OrthoDB" id="1733332at2759"/>
<dbReference type="PhylomeDB" id="Q9SIK1"/>
<dbReference type="BRENDA" id="2.7.7.27">
    <property type="organism ID" value="399"/>
</dbReference>
<dbReference type="SABIO-RK" id="Q9SIK1"/>
<dbReference type="UniPathway" id="UPA00152"/>
<dbReference type="PRO" id="PR:Q9SIK1"/>
<dbReference type="Proteomes" id="UP000006548">
    <property type="component" value="Chromosome 2"/>
</dbReference>
<dbReference type="ExpressionAtlas" id="Q9SIK1">
    <property type="expression patterns" value="baseline and differential"/>
</dbReference>
<dbReference type="GO" id="GO:0009507">
    <property type="term" value="C:chloroplast"/>
    <property type="evidence" value="ECO:0007669"/>
    <property type="project" value="UniProtKB-SubCell"/>
</dbReference>
<dbReference type="GO" id="GO:0010170">
    <property type="term" value="C:glucose-1-phosphate adenylyltransferase complex"/>
    <property type="evidence" value="ECO:0000314"/>
    <property type="project" value="TAIR"/>
</dbReference>
<dbReference type="GO" id="GO:0005524">
    <property type="term" value="F:ATP binding"/>
    <property type="evidence" value="ECO:0007669"/>
    <property type="project" value="UniProtKB-KW"/>
</dbReference>
<dbReference type="GO" id="GO:0008878">
    <property type="term" value="F:glucose-1-phosphate adenylyltransferase activity"/>
    <property type="evidence" value="ECO:0000314"/>
    <property type="project" value="TAIR"/>
</dbReference>
<dbReference type="GO" id="GO:0005978">
    <property type="term" value="P:glycogen biosynthetic process"/>
    <property type="evidence" value="ECO:0007669"/>
    <property type="project" value="InterPro"/>
</dbReference>
<dbReference type="GO" id="GO:0019252">
    <property type="term" value="P:starch biosynthetic process"/>
    <property type="evidence" value="ECO:0000304"/>
    <property type="project" value="TAIR"/>
</dbReference>
<dbReference type="CDD" id="cd02508">
    <property type="entry name" value="ADP_Glucose_PP"/>
    <property type="match status" value="1"/>
</dbReference>
<dbReference type="CDD" id="cd04651">
    <property type="entry name" value="LbH_G1P_AT_C"/>
    <property type="match status" value="1"/>
</dbReference>
<dbReference type="FunFam" id="2.160.10.10:FF:000010">
    <property type="entry name" value="Glucose-1-phosphate adenylyltransferase"/>
    <property type="match status" value="1"/>
</dbReference>
<dbReference type="FunFam" id="3.90.550.10:FF:000030">
    <property type="entry name" value="Glucose-1-phosphate adenylyltransferase"/>
    <property type="match status" value="1"/>
</dbReference>
<dbReference type="Gene3D" id="2.160.10.10">
    <property type="entry name" value="Hexapeptide repeat proteins"/>
    <property type="match status" value="1"/>
</dbReference>
<dbReference type="Gene3D" id="3.90.550.10">
    <property type="entry name" value="Spore Coat Polysaccharide Biosynthesis Protein SpsA, Chain A"/>
    <property type="match status" value="1"/>
</dbReference>
<dbReference type="InterPro" id="IPR011831">
    <property type="entry name" value="ADP-Glc_PPase"/>
</dbReference>
<dbReference type="InterPro" id="IPR005836">
    <property type="entry name" value="ADP_Glu_pyroP_CS"/>
</dbReference>
<dbReference type="InterPro" id="IPR005835">
    <property type="entry name" value="NTP_transferase_dom"/>
</dbReference>
<dbReference type="InterPro" id="IPR029044">
    <property type="entry name" value="Nucleotide-diphossugar_trans"/>
</dbReference>
<dbReference type="InterPro" id="IPR011004">
    <property type="entry name" value="Trimer_LpxA-like_sf"/>
</dbReference>
<dbReference type="NCBIfam" id="TIGR02091">
    <property type="entry name" value="glgC"/>
    <property type="match status" value="1"/>
</dbReference>
<dbReference type="NCBIfam" id="NF002772">
    <property type="entry name" value="PRK02862.1"/>
    <property type="match status" value="1"/>
</dbReference>
<dbReference type="PANTHER" id="PTHR43523:SF14">
    <property type="entry name" value="GLUCOSE-1-PHOSPHATE ADENYLYLTRANSFERASE LARGE SUBUNIT, CHLOROPLASTIC-RELATED"/>
    <property type="match status" value="1"/>
</dbReference>
<dbReference type="PANTHER" id="PTHR43523">
    <property type="entry name" value="GLUCOSE-1-PHOSPHATE ADENYLYLTRANSFERASE-RELATED"/>
    <property type="match status" value="1"/>
</dbReference>
<dbReference type="Pfam" id="PF25247">
    <property type="entry name" value="LbH_GLGC"/>
    <property type="match status" value="1"/>
</dbReference>
<dbReference type="Pfam" id="PF00483">
    <property type="entry name" value="NTP_transferase"/>
    <property type="match status" value="1"/>
</dbReference>
<dbReference type="SUPFAM" id="SSF53448">
    <property type="entry name" value="Nucleotide-diphospho-sugar transferases"/>
    <property type="match status" value="1"/>
</dbReference>
<dbReference type="SUPFAM" id="SSF51161">
    <property type="entry name" value="Trimeric LpxA-like enzymes"/>
    <property type="match status" value="1"/>
</dbReference>
<dbReference type="PROSITE" id="PS00808">
    <property type="entry name" value="ADP_GLC_PYROPHOSPH_1"/>
    <property type="match status" value="1"/>
</dbReference>
<dbReference type="PROSITE" id="PS00809">
    <property type="entry name" value="ADP_GLC_PYROPHOSPH_2"/>
    <property type="match status" value="1"/>
</dbReference>
<dbReference type="PROSITE" id="PS00810">
    <property type="entry name" value="ADP_GLC_PYROPHOSPH_3"/>
    <property type="match status" value="1"/>
</dbReference>
<gene>
    <name type="ordered locus">At2g21590</name>
    <name type="ORF">F2G1.14</name>
</gene>
<evidence type="ECO:0000250" key="1"/>
<evidence type="ECO:0000255" key="2"/>
<evidence type="ECO:0000305" key="3"/>
<proteinExistence type="evidence at transcript level"/>
<protein>
    <recommendedName>
        <fullName>Probable glucose-1-phosphate adenylyltransferase large subunit, chloroplastic</fullName>
        <ecNumber>2.7.7.27</ecNumber>
    </recommendedName>
    <alternativeName>
        <fullName>ADP-glucose pyrophosphorylase</fullName>
    </alternativeName>
    <alternativeName>
        <fullName>ADP-glucose synthase</fullName>
    </alternativeName>
    <alternativeName>
        <fullName>AGPase S</fullName>
    </alternativeName>
    <alternativeName>
        <fullName>Alpha-D-glucose-1-phosphate adenyl transferase</fullName>
    </alternativeName>
</protein>
<feature type="transit peptide" description="Chloroplast" evidence="2">
    <location>
        <begin position="1"/>
        <end status="unknown"/>
    </location>
</feature>
<feature type="chain" id="PRO_0000011162" description="Probable glucose-1-phosphate adenylyltransferase large subunit, chloroplastic">
    <location>
        <begin status="unknown"/>
        <end position="523"/>
    </location>
</feature>
<keyword id="KW-0021">Allosteric enzyme</keyword>
<keyword id="KW-0067">ATP-binding</keyword>
<keyword id="KW-0150">Chloroplast</keyword>
<keyword id="KW-0547">Nucleotide-binding</keyword>
<keyword id="KW-0548">Nucleotidyltransferase</keyword>
<keyword id="KW-0934">Plastid</keyword>
<keyword id="KW-1185">Reference proteome</keyword>
<keyword id="KW-0750">Starch biosynthesis</keyword>
<keyword id="KW-0808">Transferase</keyword>
<keyword id="KW-0809">Transit peptide</keyword>
<comment type="function">
    <text evidence="1">This protein plays a role in synthesis of starch. It catalyzes the synthesis of the activated glycosyl donor, ADP-glucose from Glc-1-P and ATP (By similarity).</text>
</comment>
<comment type="catalytic activity">
    <reaction>
        <text>alpha-D-glucose 1-phosphate + ATP + H(+) = ADP-alpha-D-glucose + diphosphate</text>
        <dbReference type="Rhea" id="RHEA:12120"/>
        <dbReference type="ChEBI" id="CHEBI:15378"/>
        <dbReference type="ChEBI" id="CHEBI:30616"/>
        <dbReference type="ChEBI" id="CHEBI:33019"/>
        <dbReference type="ChEBI" id="CHEBI:57498"/>
        <dbReference type="ChEBI" id="CHEBI:58601"/>
        <dbReference type="EC" id="2.7.7.27"/>
    </reaction>
</comment>
<comment type="activity regulation">
    <text evidence="1">Activated by 3'phosphoglycerate, inhibited by orthophosphate. Allosteric regulation (By similarity).</text>
</comment>
<comment type="pathway">
    <text>Glycan biosynthesis; starch biosynthesis.</text>
</comment>
<comment type="subunit">
    <text evidence="1">Heterotetramer.</text>
</comment>
<comment type="subcellular location">
    <subcellularLocation>
        <location>Plastid</location>
        <location>Chloroplast</location>
    </subcellularLocation>
</comment>
<comment type="similarity">
    <text evidence="3">Belongs to the bacterial/plant glucose-1-phosphate adenylyltransferase family.</text>
</comment>